<comment type="function">
    <text evidence="1">Attaches a formyl group to the free amino group of methionyl-tRNA(fMet). The formyl group appears to play a dual role in the initiator identity of N-formylmethionyl-tRNA by promoting its recognition by IF2 and preventing the misappropriation of this tRNA by the elongation apparatus.</text>
</comment>
<comment type="catalytic activity">
    <reaction evidence="1">
        <text>L-methionyl-tRNA(fMet) + (6R)-10-formyltetrahydrofolate = N-formyl-L-methionyl-tRNA(fMet) + (6S)-5,6,7,8-tetrahydrofolate + H(+)</text>
        <dbReference type="Rhea" id="RHEA:24380"/>
        <dbReference type="Rhea" id="RHEA-COMP:9952"/>
        <dbReference type="Rhea" id="RHEA-COMP:9953"/>
        <dbReference type="ChEBI" id="CHEBI:15378"/>
        <dbReference type="ChEBI" id="CHEBI:57453"/>
        <dbReference type="ChEBI" id="CHEBI:78530"/>
        <dbReference type="ChEBI" id="CHEBI:78844"/>
        <dbReference type="ChEBI" id="CHEBI:195366"/>
        <dbReference type="EC" id="2.1.2.9"/>
    </reaction>
</comment>
<comment type="similarity">
    <text evidence="1">Belongs to the Fmt family.</text>
</comment>
<name>FMT_KLEP3</name>
<keyword id="KW-0648">Protein biosynthesis</keyword>
<keyword id="KW-0808">Transferase</keyword>
<dbReference type="EC" id="2.1.2.9" evidence="1"/>
<dbReference type="EMBL" id="CP000964">
    <property type="protein sequence ID" value="ACI09059.1"/>
    <property type="molecule type" value="Genomic_DNA"/>
</dbReference>
<dbReference type="SMR" id="B5XNC3"/>
<dbReference type="KEGG" id="kpe:KPK_0428"/>
<dbReference type="HOGENOM" id="CLU_033347_1_2_6"/>
<dbReference type="Proteomes" id="UP000001734">
    <property type="component" value="Chromosome"/>
</dbReference>
<dbReference type="GO" id="GO:0005829">
    <property type="term" value="C:cytosol"/>
    <property type="evidence" value="ECO:0007669"/>
    <property type="project" value="TreeGrafter"/>
</dbReference>
<dbReference type="GO" id="GO:0004479">
    <property type="term" value="F:methionyl-tRNA formyltransferase activity"/>
    <property type="evidence" value="ECO:0007669"/>
    <property type="project" value="UniProtKB-UniRule"/>
</dbReference>
<dbReference type="CDD" id="cd08646">
    <property type="entry name" value="FMT_core_Met-tRNA-FMT_N"/>
    <property type="match status" value="1"/>
</dbReference>
<dbReference type="CDD" id="cd08704">
    <property type="entry name" value="Met_tRNA_FMT_C"/>
    <property type="match status" value="1"/>
</dbReference>
<dbReference type="FunFam" id="3.10.25.10:FF:000001">
    <property type="entry name" value="Methionyl-tRNA formyltransferase"/>
    <property type="match status" value="1"/>
</dbReference>
<dbReference type="FunFam" id="3.40.50.170:FF:000003">
    <property type="entry name" value="Methionyl-tRNA formyltransferase"/>
    <property type="match status" value="1"/>
</dbReference>
<dbReference type="Gene3D" id="3.10.25.10">
    <property type="entry name" value="Formyl transferase, C-terminal domain"/>
    <property type="match status" value="1"/>
</dbReference>
<dbReference type="Gene3D" id="3.40.50.170">
    <property type="entry name" value="Formyl transferase, N-terminal domain"/>
    <property type="match status" value="1"/>
</dbReference>
<dbReference type="HAMAP" id="MF_00182">
    <property type="entry name" value="Formyl_trans"/>
    <property type="match status" value="1"/>
</dbReference>
<dbReference type="InterPro" id="IPR005794">
    <property type="entry name" value="Fmt"/>
</dbReference>
<dbReference type="InterPro" id="IPR005793">
    <property type="entry name" value="Formyl_trans_C"/>
</dbReference>
<dbReference type="InterPro" id="IPR037022">
    <property type="entry name" value="Formyl_trans_C_sf"/>
</dbReference>
<dbReference type="InterPro" id="IPR002376">
    <property type="entry name" value="Formyl_transf_N"/>
</dbReference>
<dbReference type="InterPro" id="IPR036477">
    <property type="entry name" value="Formyl_transf_N_sf"/>
</dbReference>
<dbReference type="InterPro" id="IPR011034">
    <property type="entry name" value="Formyl_transferase-like_C_sf"/>
</dbReference>
<dbReference type="InterPro" id="IPR001555">
    <property type="entry name" value="GART_AS"/>
</dbReference>
<dbReference type="InterPro" id="IPR044135">
    <property type="entry name" value="Met-tRNA-FMT_C"/>
</dbReference>
<dbReference type="InterPro" id="IPR041711">
    <property type="entry name" value="Met-tRNA-FMT_N"/>
</dbReference>
<dbReference type="NCBIfam" id="TIGR00460">
    <property type="entry name" value="fmt"/>
    <property type="match status" value="1"/>
</dbReference>
<dbReference type="PANTHER" id="PTHR11138">
    <property type="entry name" value="METHIONYL-TRNA FORMYLTRANSFERASE"/>
    <property type="match status" value="1"/>
</dbReference>
<dbReference type="PANTHER" id="PTHR11138:SF5">
    <property type="entry name" value="METHIONYL-TRNA FORMYLTRANSFERASE, MITOCHONDRIAL"/>
    <property type="match status" value="1"/>
</dbReference>
<dbReference type="Pfam" id="PF02911">
    <property type="entry name" value="Formyl_trans_C"/>
    <property type="match status" value="1"/>
</dbReference>
<dbReference type="Pfam" id="PF00551">
    <property type="entry name" value="Formyl_trans_N"/>
    <property type="match status" value="1"/>
</dbReference>
<dbReference type="SUPFAM" id="SSF50486">
    <property type="entry name" value="FMT C-terminal domain-like"/>
    <property type="match status" value="1"/>
</dbReference>
<dbReference type="SUPFAM" id="SSF53328">
    <property type="entry name" value="Formyltransferase"/>
    <property type="match status" value="1"/>
</dbReference>
<dbReference type="PROSITE" id="PS00373">
    <property type="entry name" value="GART"/>
    <property type="match status" value="1"/>
</dbReference>
<gene>
    <name evidence="1" type="primary">fmt</name>
    <name type="ordered locus">KPK_0428</name>
</gene>
<evidence type="ECO:0000255" key="1">
    <source>
        <dbReference type="HAMAP-Rule" id="MF_00182"/>
    </source>
</evidence>
<feature type="chain" id="PRO_1000098412" description="Methionyl-tRNA formyltransferase">
    <location>
        <begin position="1"/>
        <end position="315"/>
    </location>
</feature>
<feature type="binding site" evidence="1">
    <location>
        <begin position="113"/>
        <end position="116"/>
    </location>
    <ligand>
        <name>(6S)-5,6,7,8-tetrahydrofolate</name>
        <dbReference type="ChEBI" id="CHEBI:57453"/>
    </ligand>
</feature>
<organism>
    <name type="scientific">Klebsiella pneumoniae (strain 342)</name>
    <dbReference type="NCBI Taxonomy" id="507522"/>
    <lineage>
        <taxon>Bacteria</taxon>
        <taxon>Pseudomonadati</taxon>
        <taxon>Pseudomonadota</taxon>
        <taxon>Gammaproteobacteria</taxon>
        <taxon>Enterobacterales</taxon>
        <taxon>Enterobacteriaceae</taxon>
        <taxon>Klebsiella/Raoultella group</taxon>
        <taxon>Klebsiella</taxon>
        <taxon>Klebsiella pneumoniae complex</taxon>
    </lineage>
</organism>
<proteinExistence type="inferred from homology"/>
<accession>B5XNC3</accession>
<sequence>MSHSLRIIFAGTPDFAARHLDALLSSEHQIVGVFTQPDRPAGRGKKLMPSPVKVLAEAHDVPVFQPSSLRPQENQQLVADLGADIMVVVAYGLILPKAVLEMPRLGCINVHGSLLPRWRGAAPIQRSLWAGDSETGVTIMQMDVGLDTGDMLYKLSCPITAEDTSGSLYDKLADLGPQGLLTTLAQLANGTAQPEVQDESLVSYAEKLSKEEARIDWSLSAAQLERCIRAFNPWPMSWLEIDGQPVKVWRASVIAEVTHAEPGTIVAATKQGIQVATGDGILSLESLQPAGKKAMSSQDLLNSRREWFIPGTRLA</sequence>
<reference key="1">
    <citation type="journal article" date="2008" name="PLoS Genet.">
        <title>Complete genome sequence of the N2-fixing broad host range endophyte Klebsiella pneumoniae 342 and virulence predictions verified in mice.</title>
        <authorList>
            <person name="Fouts D.E."/>
            <person name="Tyler H.L."/>
            <person name="DeBoy R.T."/>
            <person name="Daugherty S."/>
            <person name="Ren Q."/>
            <person name="Badger J.H."/>
            <person name="Durkin A.S."/>
            <person name="Huot H."/>
            <person name="Shrivastava S."/>
            <person name="Kothari S."/>
            <person name="Dodson R.J."/>
            <person name="Mohamoud Y."/>
            <person name="Khouri H."/>
            <person name="Roesch L.F.W."/>
            <person name="Krogfelt K.A."/>
            <person name="Struve C."/>
            <person name="Triplett E.W."/>
            <person name="Methe B.A."/>
        </authorList>
    </citation>
    <scope>NUCLEOTIDE SEQUENCE [LARGE SCALE GENOMIC DNA]</scope>
    <source>
        <strain>342</strain>
    </source>
</reference>
<protein>
    <recommendedName>
        <fullName evidence="1">Methionyl-tRNA formyltransferase</fullName>
        <ecNumber evidence="1">2.1.2.9</ecNumber>
    </recommendedName>
</protein>